<proteinExistence type="inferred from homology"/>
<dbReference type="EMBL" id="AF309418">
    <property type="protein sequence ID" value="AAG36982.1"/>
    <property type="molecule type" value="Genomic_RNA"/>
</dbReference>
<dbReference type="RefSeq" id="NP_071466.1">
    <property type="nucleotide sequence ID" value="NC_002617.1"/>
</dbReference>
<dbReference type="SMR" id="Q77K03"/>
<dbReference type="Proteomes" id="UP000002328">
    <property type="component" value="Segment"/>
</dbReference>
<dbReference type="GO" id="GO:0019029">
    <property type="term" value="C:helical viral capsid"/>
    <property type="evidence" value="ECO:0007669"/>
    <property type="project" value="UniProtKB-KW"/>
</dbReference>
<dbReference type="GO" id="GO:0030430">
    <property type="term" value="C:host cell cytoplasm"/>
    <property type="evidence" value="ECO:0007669"/>
    <property type="project" value="UniProtKB-SubCell"/>
</dbReference>
<dbReference type="GO" id="GO:1990904">
    <property type="term" value="C:ribonucleoprotein complex"/>
    <property type="evidence" value="ECO:0007669"/>
    <property type="project" value="UniProtKB-KW"/>
</dbReference>
<dbReference type="GO" id="GO:0019013">
    <property type="term" value="C:viral nucleocapsid"/>
    <property type="evidence" value="ECO:0007669"/>
    <property type="project" value="UniProtKB-KW"/>
</dbReference>
<dbReference type="GO" id="GO:0003723">
    <property type="term" value="F:RNA binding"/>
    <property type="evidence" value="ECO:0007669"/>
    <property type="project" value="UniProtKB-KW"/>
</dbReference>
<dbReference type="GO" id="GO:0005198">
    <property type="term" value="F:structural molecule activity"/>
    <property type="evidence" value="ECO:0007669"/>
    <property type="project" value="InterPro"/>
</dbReference>
<dbReference type="InterPro" id="IPR002021">
    <property type="entry name" value="Paramyx_ncap"/>
</dbReference>
<dbReference type="Pfam" id="PF00973">
    <property type="entry name" value="Paramyxo_ncap"/>
    <property type="match status" value="1"/>
</dbReference>
<evidence type="ECO:0000250" key="1"/>
<evidence type="ECO:0000250" key="2">
    <source>
        <dbReference type="UniProtKB" id="O57286"/>
    </source>
</evidence>
<evidence type="ECO:0000250" key="3">
    <source>
        <dbReference type="UniProtKB" id="O89339"/>
    </source>
</evidence>
<evidence type="ECO:0000250" key="4">
    <source>
        <dbReference type="UniProtKB" id="P06159"/>
    </source>
</evidence>
<evidence type="ECO:0000250" key="5">
    <source>
        <dbReference type="UniProtKB" id="Q07097"/>
    </source>
</evidence>
<evidence type="ECO:0000256" key="6">
    <source>
        <dbReference type="SAM" id="MobiDB-lite"/>
    </source>
</evidence>
<evidence type="ECO:0000305" key="7"/>
<keyword id="KW-0167">Capsid protein</keyword>
<keyword id="KW-1139">Helical capsid protein</keyword>
<keyword id="KW-1035">Host cytoplasm</keyword>
<keyword id="KW-1185">Reference proteome</keyword>
<keyword id="KW-0687">Ribonucleoprotein</keyword>
<keyword id="KW-0694">RNA-binding</keyword>
<keyword id="KW-0543">Viral nucleoprotein</keyword>
<keyword id="KW-0946">Virion</keyword>
<comment type="function">
    <text evidence="3 4">Forms the helical nucleocapsid (NC) in a ratio of 1 N per 6 ribonucleotides, protecting the genome from nucleases (By similarity). The encapsidated genomic RNA serves as template for transcription and replication; encapsidation by N is coupled to RNA synthesis. Forms the encapsidation complex with the phosphoprotein protein P. Before encapsidation, the newly synthesized free N protein, so-called N0, is chaperoned by P (By similarity).</text>
</comment>
<comment type="subunit">
    <text evidence="2 4 5">Homomultimer; forms the nucleocapsid (By similarity). Binds to the viral genomic RNA (By similarity). N0 interacts with the phosphoprotein (via N-terminus); this interaction allows P to chaperon N0 to avoid N polymerization before encapsidation. Interacts as N-RNA template with the phosphoprotein (via C-terminus); this interaction positions the polymerase on the template (By similarity).</text>
</comment>
<comment type="subcellular location">
    <subcellularLocation>
        <location evidence="7">Virion</location>
    </subcellularLocation>
    <subcellularLocation>
        <location>Host cytoplasm</location>
    </subcellularLocation>
</comment>
<comment type="domain">
    <text evidence="4">Ncore is globular and carries the regions required for self-assembly and RNA-binding. Ntail is an intrinsically disordered monomeric domain in the C-terminus.</text>
</comment>
<comment type="similarity">
    <text evidence="7">Belongs to the paramyxoviruses nucleocapsid family.</text>
</comment>
<gene>
    <name type="primary">N</name>
    <name type="synonym">NP</name>
</gene>
<accession>Q77K03</accession>
<protein>
    <recommendedName>
        <fullName>Nucleoprotein</fullName>
    </recommendedName>
    <alternativeName>
        <fullName>Nucleocapsid protein</fullName>
        <shortName>NP</shortName>
        <shortName>Protein N</shortName>
    </alternativeName>
</protein>
<sequence length="489" mass="53023">MSSVFDEYEQLLAAQTRPNGAHGGGEKGSTLKVDVPVFTLNSDDPEDRWSFVVFCLRIAVSEDANKPLRQGALISLLCSHSQVMRNHVALAGKQNEATLAVLEIDGFANGTPQFNNRSGVSEERAQRFAMIAGSLPRACSNGTPFVTAGAEDDAPEDITDTLERILSIQAQVWVTVAKAMTAYETADESETRRINKYMQQGRVQKKYILYPVCRSTIQLTIRQSLAVRIFLVSELKRGRNTAGGTSTYYNLVGDVDSYIRNTGLTAFFLTLKYGINTKTSALALSSLSGDIQKMKQLMRLYRMKGDNAPYMTLLGDSDQMSFAPAEYAQLYSFAMGMASVLDKGTGKYQFAKDFMSTSFWRLGVEYAQAQGSSINEDMAAELKLTPAARRGLAAAAQRVSEVTSSIDMPTQQVGVLTGLSEGGSQALQGGSNRSQGQPEAGDGETQFLDLMRAVANSMREAPNSAQGTPQSGPPPTPGPSQDNDTDWGY</sequence>
<feature type="chain" id="PRO_0000390786" description="Nucleoprotein">
    <location>
        <begin position="1"/>
        <end position="489"/>
    </location>
</feature>
<feature type="region of interest" description="Ncore" evidence="4">
    <location>
        <begin position="1"/>
        <end position="402"/>
    </location>
</feature>
<feature type="region of interest" description="P protein-binding" evidence="1">
    <location>
        <begin position="1"/>
        <end position="375"/>
    </location>
</feature>
<feature type="region of interest" description="Ntail" evidence="4">
    <location>
        <begin position="403"/>
        <end position="489"/>
    </location>
</feature>
<feature type="region of interest" description="Disordered" evidence="6">
    <location>
        <begin position="421"/>
        <end position="489"/>
    </location>
</feature>
<feature type="compositionally biased region" description="Polar residues" evidence="6">
    <location>
        <begin position="422"/>
        <end position="437"/>
    </location>
</feature>
<feature type="binding site" evidence="2">
    <location>
        <position position="178"/>
    </location>
    <ligand>
        <name>RNA</name>
        <dbReference type="ChEBI" id="CHEBI:33697"/>
    </ligand>
</feature>
<feature type="binding site" evidence="2">
    <location>
        <position position="193"/>
    </location>
    <ligand>
        <name>RNA</name>
        <dbReference type="ChEBI" id="CHEBI:33697"/>
    </ligand>
</feature>
<feature type="binding site" evidence="2">
    <location>
        <position position="258"/>
    </location>
    <ligand>
        <name>RNA</name>
        <dbReference type="ChEBI" id="CHEBI:33697"/>
    </ligand>
</feature>
<feature type="binding site" evidence="2">
    <location>
        <position position="348"/>
    </location>
    <ligand>
        <name>RNA</name>
        <dbReference type="ChEBI" id="CHEBI:33697"/>
    </ligand>
</feature>
<feature type="binding site" evidence="2">
    <location>
        <position position="352"/>
    </location>
    <ligand>
        <name>RNA</name>
        <dbReference type="ChEBI" id="CHEBI:33697"/>
    </ligand>
</feature>
<organismHost>
    <name type="scientific">Gallus gallus</name>
    <name type="common">Chicken</name>
    <dbReference type="NCBI Taxonomy" id="9031"/>
</organismHost>
<reference key="1">
    <citation type="submission" date="2000-09" db="EMBL/GenBank/DDBJ databases">
        <title>Complete sequence for the B1 strain of Newcastle disease virus.</title>
        <authorList>
            <person name="Sellers H.S."/>
            <person name="Seal B.S."/>
        </authorList>
    </citation>
    <scope>NUCLEOTIDE SEQUENCE [GENOMIC RNA]</scope>
    <source>
        <strain>B1</strain>
    </source>
</reference>
<organism>
    <name type="scientific">Newcastle disease virus (strain Chicken/United States/B1/48)</name>
    <name type="common">NDV</name>
    <dbReference type="NCBI Taxonomy" id="652953"/>
    <lineage>
        <taxon>Viruses</taxon>
        <taxon>Riboviria</taxon>
        <taxon>Orthornavirae</taxon>
        <taxon>Negarnaviricota</taxon>
        <taxon>Haploviricotina</taxon>
        <taxon>Monjiviricetes</taxon>
        <taxon>Mononegavirales</taxon>
        <taxon>Paramyxoviridae</taxon>
        <taxon>Avulavirinae</taxon>
        <taxon>Orthoavulavirus</taxon>
        <taxon>Orthoavulavirus javaense</taxon>
        <taxon>Avian paramyxovirus 1</taxon>
    </lineage>
</organism>
<name>NCAP_NDVB1</name>